<name>FAT1_HUMAN</name>
<protein>
    <recommendedName>
        <fullName>Protocadherin Fat 1</fullName>
    </recommendedName>
    <alternativeName>
        <fullName>Cadherin family member 7</fullName>
    </alternativeName>
    <alternativeName>
        <fullName>Cadherin-related tumor suppressor homolog</fullName>
    </alternativeName>
    <alternativeName>
        <fullName>Protein fat homolog</fullName>
    </alternativeName>
    <component>
        <recommendedName>
            <fullName>Protocadherin Fat 1, nuclear form</fullName>
        </recommendedName>
    </component>
</protein>
<feature type="signal peptide" evidence="2">
    <location>
        <begin position="1"/>
        <end position="21"/>
    </location>
</feature>
<feature type="chain" id="PRO_0000004017" description="Protocadherin Fat 1">
    <location>
        <begin position="22"/>
        <end position="4588"/>
    </location>
</feature>
<feature type="chain" id="PRO_0000408559" description="Protocadherin Fat 1, nuclear form">
    <location>
        <begin status="unknown"/>
        <end position="4588"/>
    </location>
</feature>
<feature type="topological domain" description="Extracellular" evidence="2">
    <location>
        <begin position="22"/>
        <end position="4181"/>
    </location>
</feature>
<feature type="transmembrane region" description="Helical" evidence="2">
    <location>
        <begin position="4182"/>
        <end position="4202"/>
    </location>
</feature>
<feature type="topological domain" description="Cytoplasmic" evidence="2">
    <location>
        <begin position="4203"/>
        <end position="4588"/>
    </location>
</feature>
<feature type="domain" description="Cadherin 1" evidence="3">
    <location>
        <begin position="35"/>
        <end position="149"/>
    </location>
</feature>
<feature type="domain" description="Cadherin 2" evidence="3">
    <location>
        <begin position="150"/>
        <end position="257"/>
    </location>
</feature>
<feature type="domain" description="Cadherin 3" evidence="3">
    <location>
        <begin position="368"/>
        <end position="463"/>
    </location>
</feature>
<feature type="domain" description="Cadherin 4" evidence="3">
    <location>
        <begin position="464"/>
        <end position="569"/>
    </location>
</feature>
<feature type="domain" description="Cadherin 5" evidence="3">
    <location>
        <begin position="570"/>
        <end position="673"/>
    </location>
</feature>
<feature type="domain" description="Cadherin 6" evidence="3">
    <location>
        <begin position="718"/>
        <end position="822"/>
    </location>
</feature>
<feature type="domain" description="Cadherin 7" evidence="3">
    <location>
        <begin position="823"/>
        <end position="927"/>
    </location>
</feature>
<feature type="domain" description="Cadherin 8" evidence="3">
    <location>
        <begin position="928"/>
        <end position="1034"/>
    </location>
</feature>
<feature type="domain" description="Cadherin 9" evidence="3">
    <location>
        <begin position="1035"/>
        <end position="1139"/>
    </location>
</feature>
<feature type="domain" description="Cadherin 10" evidence="3">
    <location>
        <begin position="1140"/>
        <end position="1245"/>
    </location>
</feature>
<feature type="domain" description="Cadherin 11" evidence="3">
    <location>
        <begin position="1246"/>
        <end position="1357"/>
    </location>
</feature>
<feature type="domain" description="Cadherin 12" evidence="3">
    <location>
        <begin position="1359"/>
        <end position="1456"/>
    </location>
</feature>
<feature type="domain" description="Cadherin 13" evidence="3">
    <location>
        <begin position="1457"/>
        <end position="1562"/>
    </location>
</feature>
<feature type="domain" description="Cadherin 14" evidence="3">
    <location>
        <begin position="1563"/>
        <end position="1667"/>
    </location>
</feature>
<feature type="domain" description="Cadherin 15" evidence="3">
    <location>
        <begin position="1668"/>
        <end position="1765"/>
    </location>
</feature>
<feature type="domain" description="Cadherin 16" evidence="3">
    <location>
        <begin position="1766"/>
        <end position="1879"/>
    </location>
</feature>
<feature type="domain" description="Cadherin 17" evidence="3">
    <location>
        <begin position="1880"/>
        <end position="1979"/>
    </location>
</feature>
<feature type="domain" description="Cadherin 18" evidence="3">
    <location>
        <begin position="1980"/>
        <end position="2081"/>
    </location>
</feature>
<feature type="domain" description="Cadherin 19" evidence="3">
    <location>
        <begin position="2082"/>
        <end position="2182"/>
    </location>
</feature>
<feature type="domain" description="Cadherin 20" evidence="3">
    <location>
        <begin position="2183"/>
        <end position="2283"/>
    </location>
</feature>
<feature type="domain" description="Cadherin 21" evidence="3">
    <location>
        <begin position="2284"/>
        <end position="2390"/>
    </location>
</feature>
<feature type="domain" description="Cadherin 22" evidence="3">
    <location>
        <begin position="2391"/>
        <end position="2492"/>
    </location>
</feature>
<feature type="domain" description="Cadherin 23" evidence="3">
    <location>
        <begin position="2493"/>
        <end position="2596"/>
    </location>
</feature>
<feature type="domain" description="Cadherin 24" evidence="3">
    <location>
        <begin position="2597"/>
        <end position="2703"/>
    </location>
</feature>
<feature type="domain" description="Cadherin 25" evidence="3">
    <location>
        <begin position="2704"/>
        <end position="2809"/>
    </location>
</feature>
<feature type="domain" description="Cadherin 26" evidence="3">
    <location>
        <begin position="2810"/>
        <end position="2918"/>
    </location>
</feature>
<feature type="domain" description="Cadherin 27" evidence="3">
    <location>
        <begin position="2919"/>
        <end position="3023"/>
    </location>
</feature>
<feature type="domain" description="Cadherin 28" evidence="3">
    <location>
        <begin position="3024"/>
        <end position="3125"/>
    </location>
</feature>
<feature type="domain" description="Cadherin 29" evidence="3">
    <location>
        <begin position="3126"/>
        <end position="3230"/>
    </location>
</feature>
<feature type="domain" description="Cadherin 30" evidence="3">
    <location>
        <begin position="3231"/>
        <end position="3335"/>
    </location>
</feature>
<feature type="domain" description="Cadherin 31" evidence="3">
    <location>
        <begin position="3336"/>
        <end position="3440"/>
    </location>
</feature>
<feature type="domain" description="Cadherin 32" evidence="3">
    <location>
        <begin position="3441"/>
        <end position="3545"/>
    </location>
</feature>
<feature type="domain" description="Cadherin 33" evidence="3">
    <location>
        <begin position="3546"/>
        <end position="3647"/>
    </location>
</feature>
<feature type="domain" description="EGF-like 1" evidence="4">
    <location>
        <begin position="3790"/>
        <end position="3827"/>
    </location>
</feature>
<feature type="domain" description="Laminin G-like" evidence="5">
    <location>
        <begin position="3829"/>
        <end position="4009"/>
    </location>
</feature>
<feature type="domain" description="EGF-like 2" evidence="4">
    <location>
        <begin position="4013"/>
        <end position="4050"/>
    </location>
</feature>
<feature type="domain" description="EGF-like 3" evidence="4">
    <location>
        <begin position="4052"/>
        <end position="4088"/>
    </location>
</feature>
<feature type="domain" description="EGF-like 4" evidence="4">
    <location>
        <begin position="4089"/>
        <end position="4125"/>
    </location>
</feature>
<feature type="domain" description="EGF-like 5; calcium-binding" evidence="4">
    <location>
        <begin position="4127"/>
        <end position="4163"/>
    </location>
</feature>
<feature type="region of interest" description="Disordered" evidence="6">
    <location>
        <begin position="4255"/>
        <end position="4275"/>
    </location>
</feature>
<feature type="region of interest" description="Disordered" evidence="6">
    <location>
        <begin position="4303"/>
        <end position="4327"/>
    </location>
</feature>
<feature type="region of interest" description="Disordered" evidence="6">
    <location>
        <begin position="4343"/>
        <end position="4376"/>
    </location>
</feature>
<feature type="region of interest" description="Disordered" evidence="6">
    <location>
        <begin position="4435"/>
        <end position="4479"/>
    </location>
</feature>
<feature type="region of interest" description="Disordered" evidence="6">
    <location>
        <begin position="4565"/>
        <end position="4588"/>
    </location>
</feature>
<feature type="short sequence motif" description="Nuclear localization signal" evidence="2">
    <location>
        <begin position="4204"/>
        <end position="4214"/>
    </location>
</feature>
<feature type="short sequence motif" description="PTB-like motif" evidence="1">
    <location>
        <begin position="4378"/>
        <end position="4382"/>
    </location>
</feature>
<feature type="compositionally biased region" description="Polar residues" evidence="6">
    <location>
        <begin position="4256"/>
        <end position="4265"/>
    </location>
</feature>
<feature type="compositionally biased region" description="Polar residues" evidence="6">
    <location>
        <begin position="4363"/>
        <end position="4374"/>
    </location>
</feature>
<feature type="glycosylation site" description="N-linked (GlcNAc...) asparagine" evidence="2">
    <location>
        <position position="40"/>
    </location>
</feature>
<feature type="glycosylation site" description="N-linked (GlcNAc...) asparagine" evidence="2">
    <location>
        <position position="333"/>
    </location>
</feature>
<feature type="glycosylation site" description="N-linked (GlcNAc...) asparagine" evidence="2">
    <location>
        <position position="660"/>
    </location>
</feature>
<feature type="glycosylation site" description="N-linked (GlcNAc...) asparagine" evidence="2">
    <location>
        <position position="740"/>
    </location>
</feature>
<feature type="glycosylation site" description="N-linked (GlcNAc...) asparagine" evidence="2">
    <location>
        <position position="791"/>
    </location>
</feature>
<feature type="glycosylation site" description="N-linked (GlcNAc...) asparagine" evidence="2">
    <location>
        <position position="998"/>
    </location>
</feature>
<feature type="glycosylation site" description="N-linked (GlcNAc...) asparagine" evidence="2">
    <location>
        <position position="1426"/>
    </location>
</feature>
<feature type="glycosylation site" description="N-linked (GlcNAc...) asparagine" evidence="2">
    <location>
        <position position="1551"/>
    </location>
</feature>
<feature type="glycosylation site" description="N-linked (GlcNAc...) asparagine" evidence="2">
    <location>
        <position position="1748"/>
    </location>
</feature>
<feature type="glycosylation site" description="N-linked (GlcNAc...) asparagine" evidence="2">
    <location>
        <position position="1864"/>
    </location>
</feature>
<feature type="glycosylation site" description="N-linked (GlcNAc...) asparagine" evidence="2">
    <location>
        <position position="1902"/>
    </location>
</feature>
<feature type="glycosylation site" description="N-linked (GlcNAc...) asparagine" evidence="2">
    <location>
        <position position="1940"/>
    </location>
</feature>
<feature type="glycosylation site" description="N-linked (GlcNAc...) asparagine" evidence="2">
    <location>
        <position position="1991"/>
    </location>
</feature>
<feature type="glycosylation site" description="N-linked (GlcNAc...) asparagine" evidence="2">
    <location>
        <position position="2325"/>
    </location>
</feature>
<feature type="glycosylation site" description="N-linked (GlcNAc...) asparagine" evidence="2">
    <location>
        <position position="2464"/>
    </location>
</feature>
<feature type="glycosylation site" description="N-linked (GlcNAc...) asparagine" evidence="2">
    <location>
        <position position="3324"/>
    </location>
</feature>
<feature type="glycosylation site" description="N-linked (GlcNAc...) asparagine" evidence="9">
    <location>
        <position position="3422"/>
    </location>
</feature>
<feature type="glycosylation site" description="N-linked (GlcNAc...) asparagine" evidence="2">
    <location>
        <position position="3444"/>
    </location>
</feature>
<feature type="glycosylation site" description="N-linked (GlcNAc...) asparagine" evidence="2">
    <location>
        <position position="3613"/>
    </location>
</feature>
<feature type="glycosylation site" description="N-linked (GlcNAc...) asparagine" evidence="2">
    <location>
        <position position="3640"/>
    </location>
</feature>
<feature type="glycosylation site" description="N-linked (GlcNAc...) asparagine" evidence="9 10">
    <location>
        <position position="3716"/>
    </location>
</feature>
<feature type="glycosylation site" description="N-linked (GlcNAc...) asparagine" evidence="2">
    <location>
        <position position="4152"/>
    </location>
</feature>
<feature type="disulfide bond" evidence="1">
    <location>
        <begin position="3794"/>
        <end position="3805"/>
    </location>
</feature>
<feature type="disulfide bond" evidence="1">
    <location>
        <begin position="3799"/>
        <end position="3816"/>
    </location>
</feature>
<feature type="disulfide bond" evidence="1">
    <location>
        <begin position="3818"/>
        <end position="3826"/>
    </location>
</feature>
<feature type="disulfide bond" evidence="1">
    <location>
        <begin position="3976"/>
        <end position="4009"/>
    </location>
</feature>
<feature type="disulfide bond" evidence="1">
    <location>
        <begin position="4017"/>
        <end position="4028"/>
    </location>
</feature>
<feature type="disulfide bond" evidence="1">
    <location>
        <begin position="4022"/>
        <end position="4038"/>
    </location>
</feature>
<feature type="disulfide bond" evidence="1">
    <location>
        <begin position="4040"/>
        <end position="4049"/>
    </location>
</feature>
<feature type="disulfide bond" evidence="1">
    <location>
        <begin position="4056"/>
        <end position="4067"/>
    </location>
</feature>
<feature type="disulfide bond" evidence="1">
    <location>
        <begin position="4061"/>
        <end position="4076"/>
    </location>
</feature>
<feature type="disulfide bond" evidence="1">
    <location>
        <begin position="4078"/>
        <end position="4087"/>
    </location>
</feature>
<feature type="disulfide bond" evidence="1">
    <location>
        <begin position="4093"/>
        <end position="4104"/>
    </location>
</feature>
<feature type="disulfide bond" evidence="1">
    <location>
        <begin position="4098"/>
        <end position="4113"/>
    </location>
</feature>
<feature type="disulfide bond" evidence="1">
    <location>
        <begin position="4115"/>
        <end position="4124"/>
    </location>
</feature>
<feature type="disulfide bond" evidence="1">
    <location>
        <begin position="4131"/>
        <end position="4142"/>
    </location>
</feature>
<feature type="disulfide bond" evidence="1">
    <location>
        <begin position="4136"/>
        <end position="4151"/>
    </location>
</feature>
<feature type="disulfide bond" evidence="1">
    <location>
        <begin position="4153"/>
        <end position="4162"/>
    </location>
</feature>
<feature type="sequence variant" id="VAR_055590" description="In dbSNP:rs3733415.">
    <original>A</original>
    <variation>V</variation>
    <location>
        <position position="131"/>
    </location>
</feature>
<feature type="sequence variant" id="VAR_080732" description="Found in a patient with spinocerebellar ataxia; uncertain significance; dbSNP:rs1373737710." evidence="12">
    <original>P</original>
    <variation>L</variation>
    <location>
        <position position="546"/>
    </location>
</feature>
<feature type="sequence variant" id="VAR_076441" description="In dbSNP:rs555992573." evidence="11">
    <original>R</original>
    <variation>S</variation>
    <location>
        <position position="902"/>
    </location>
</feature>
<feature type="sequence variant" id="VAR_080733" description="Found in a patient with spinocerebellar ataxia; uncertain significance; dbSNP:rs1383300308." evidence="12">
    <original>E</original>
    <variation>D</variation>
    <location>
        <position position="1147"/>
    </location>
</feature>
<feature type="sequence variant" id="VAR_055591" description="In dbSNP:rs874111.">
    <original>N</original>
    <variation>S</variation>
    <location>
        <position position="1330"/>
    </location>
</feature>
<feature type="sequence variant" id="VAR_076442" description="In dbSNP:rs753226094." evidence="11">
    <original>I</original>
    <variation>V</variation>
    <location>
        <position position="1393"/>
    </location>
</feature>
<feature type="sequence variant" id="VAR_055592" description="In dbSNP:rs2304867.">
    <original>A</original>
    <variation>T</variation>
    <location>
        <position position="1564"/>
    </location>
</feature>
<feature type="sequence variant" id="VAR_055593" description="In dbSNP:rs6836935.">
    <original>N</original>
    <variation>D</variation>
    <location>
        <position position="1605"/>
    </location>
</feature>
<feature type="sequence variant" id="VAR_080734" description="Found in a patient with spinocerebellar ataxia; uncertain significance; dbSNP:rs748622474." evidence="12">
    <original>D</original>
    <variation>H</variation>
    <location>
        <position position="1930"/>
    </location>
</feature>
<feature type="sequence variant" id="VAR_076443" description="In dbSNP:rs373241719." evidence="11">
    <original>N</original>
    <variation>S</variation>
    <location>
        <position position="3732"/>
    </location>
</feature>
<feature type="sequence variant" id="VAR_055594" description="In dbSNP:rs11731738.">
    <original>P</original>
    <variation>H</variation>
    <location>
        <position position="3800"/>
    </location>
</feature>
<feature type="sequence variant" id="VAR_080735" description="Found in a patient with spinocerebellar ataxia; uncertain significance; dbSNP:rs1409256573." evidence="12">
    <original>T</original>
    <variation>M</variation>
    <location>
        <position position="4422"/>
    </location>
</feature>
<feature type="sequence conflict" description="In Ref. 1; CAA60685." evidence="13" ref="1">
    <original>G</original>
    <variation>D</variation>
    <location>
        <position position="322"/>
    </location>
</feature>
<feature type="sequence conflict" description="In Ref. 1; CAA60685." evidence="13" ref="1">
    <original>S</original>
    <variation>R</variation>
    <location>
        <position position="404"/>
    </location>
</feature>
<feature type="sequence conflict" description="In Ref. 1; CAA60685." evidence="13" ref="1">
    <original>V</original>
    <variation>I</variation>
    <location>
        <position position="482"/>
    </location>
</feature>
<feature type="sequence conflict" description="In Ref. 1; CAA60685." evidence="13" ref="1">
    <original>F</original>
    <variation>L</variation>
    <location>
        <position position="614"/>
    </location>
</feature>
<feature type="sequence conflict" description="In Ref. 1; CAA60685." evidence="13" ref="1">
    <original>V</original>
    <variation>L</variation>
    <location>
        <position position="862"/>
    </location>
</feature>
<feature type="sequence conflict" description="In Ref. 1; CAA60685." evidence="13" ref="1">
    <original>R</original>
    <variation>G</variation>
    <location>
        <position position="1064"/>
    </location>
</feature>
<feature type="sequence conflict" description="In Ref. 1; CAA60685." evidence="13" ref="1">
    <original>H</original>
    <variation>R</variation>
    <location>
        <position position="1273"/>
    </location>
</feature>
<feature type="sequence conflict" description="In Ref. 1; CAA60685." evidence="13" ref="1">
    <original>P</original>
    <variation>Q</variation>
    <location>
        <position position="1351"/>
    </location>
</feature>
<feature type="sequence conflict" description="In Ref. 1; CAA60685." evidence="13" ref="1">
    <original>HQHT</original>
    <variation>SPAH</variation>
    <location>
        <begin position="1526"/>
        <end position="1529"/>
    </location>
</feature>
<feature type="sequence conflict" description="In Ref. 1; CAA60685." evidence="13" ref="1">
    <original>G</original>
    <variation>GNIG</variation>
    <location>
        <position position="1604"/>
    </location>
</feature>
<feature type="sequence conflict" description="In Ref. 1; CAA60685." evidence="13" ref="1">
    <original>N</original>
    <variation>S</variation>
    <location>
        <position position="2006"/>
    </location>
</feature>
<feature type="sequence conflict" description="In Ref. 1; CAA60685." evidence="13" ref="1">
    <original>T</original>
    <variation>I</variation>
    <location>
        <position position="2054"/>
    </location>
</feature>
<feature type="sequence conflict" description="In Ref. 1; CAA60685." evidence="13" ref="1">
    <original>D</original>
    <variation>G</variation>
    <location>
        <position position="2385"/>
    </location>
</feature>
<feature type="sequence conflict" description="In Ref. 1; CAA60685." evidence="13" ref="1">
    <original>VL</original>
    <variation>S</variation>
    <location>
        <begin position="2618"/>
        <end position="2619"/>
    </location>
</feature>
<feature type="sequence conflict" description="In Ref. 1; CAA60685." evidence="13" ref="1">
    <original>I</original>
    <variation>V</variation>
    <location>
        <position position="2718"/>
    </location>
</feature>
<feature type="sequence conflict" description="In Ref. 1; CAA60685." evidence="13" ref="1">
    <original>L</original>
    <variation>V</variation>
    <location>
        <position position="3113"/>
    </location>
</feature>
<feature type="sequence conflict" description="In Ref. 1; CAA60685." evidence="13" ref="1">
    <original>K</original>
    <variation>N</variation>
    <location>
        <position position="4059"/>
    </location>
</feature>
<organism>
    <name type="scientific">Homo sapiens</name>
    <name type="common">Human</name>
    <dbReference type="NCBI Taxonomy" id="9606"/>
    <lineage>
        <taxon>Eukaryota</taxon>
        <taxon>Metazoa</taxon>
        <taxon>Chordata</taxon>
        <taxon>Craniata</taxon>
        <taxon>Vertebrata</taxon>
        <taxon>Euteleostomi</taxon>
        <taxon>Mammalia</taxon>
        <taxon>Eutheria</taxon>
        <taxon>Euarchontoglires</taxon>
        <taxon>Primates</taxon>
        <taxon>Haplorrhini</taxon>
        <taxon>Catarrhini</taxon>
        <taxon>Hominidae</taxon>
        <taxon>Homo</taxon>
    </lineage>
</organism>
<comment type="function">
    <molecule>Protocadherin Fat 1</molecule>
    <text evidence="1">Plays an essential role for cellular polarization, directed cell migration and modulating cell-cell contact.</text>
</comment>
<comment type="subunit">
    <text evidence="8">Interacts (via the C-terminus 4300-4400 AA) with ATN1 (PubMed:19131340). Interacts with RERE (PubMed:19131340).</text>
</comment>
<comment type="interaction">
    <interactant intactId="EBI-1171918">
        <id>Q14517</id>
    </interactant>
    <interactant intactId="EBI-2834410">
        <id>Q8N8S7</id>
        <label>ENAH</label>
    </interactant>
    <organismsDiffer>false</organismsDiffer>
    <experiments>2</experiments>
</comment>
<comment type="interaction">
    <interactant intactId="EBI-1171918">
        <id>Q14517</id>
    </interactant>
    <interactant intactId="EBI-748420">
        <id>Q9NSC5</id>
        <label>HOMER3</label>
    </interactant>
    <organismsDiffer>false</organismsDiffer>
    <experiments>4</experiments>
</comment>
<comment type="interaction">
    <interactant intactId="EBI-1171918">
        <id>Q14517</id>
    </interactant>
    <interactant intactId="EBI-6272061">
        <id>Q99JP6</id>
        <label>Homer3</label>
    </interactant>
    <organismsDiffer>true</organismsDiffer>
    <experiments>2</experiments>
</comment>
<comment type="subcellular location">
    <molecule>Protocadherin Fat 1</molecule>
    <subcellularLocation>
        <location evidence="7">Cell membrane</location>
        <topology evidence="7">Single-pass type I membrane protein</topology>
    </subcellularLocation>
</comment>
<comment type="subcellular location">
    <molecule>Protocadherin Fat 1, nuclear form</molecule>
    <subcellularLocation>
        <location evidence="7">Nucleus</location>
    </subcellularLocation>
</comment>
<comment type="tissue specificity">
    <text>Expressed in many epithelial and some endothelial and smooth muscle cells.</text>
</comment>
<comment type="domain">
    <text evidence="1">A PTB-like motif (DNXYH sequence) is required for the targeting to the leading edge. This motif represents a minimal protein-protein interaction core motif that is not regulated by tyrosine phosphorylation (By similarity).</text>
</comment>
<comment type="PTM">
    <text evidence="7">Undergoes proteolytic cleavage. The extracellular domain is cleaved off and the cytoplasmic domain (about 400 AA) shuttles to the nucleus.</text>
</comment>
<comment type="online information" name="Atlas of Genetics and Cytogenetics in Oncology and Haematology">
    <link uri="https://atlasgeneticsoncology.org/gene/40533/FAT1"/>
</comment>
<keyword id="KW-0106">Calcium</keyword>
<keyword id="KW-0130">Cell adhesion</keyword>
<keyword id="KW-1003">Cell membrane</keyword>
<keyword id="KW-1015">Disulfide bond</keyword>
<keyword id="KW-0245">EGF-like domain</keyword>
<keyword id="KW-0325">Glycoprotein</keyword>
<keyword id="KW-0472">Membrane</keyword>
<keyword id="KW-0539">Nucleus</keyword>
<keyword id="KW-1267">Proteomics identification</keyword>
<keyword id="KW-1185">Reference proteome</keyword>
<keyword id="KW-0677">Repeat</keyword>
<keyword id="KW-0732">Signal</keyword>
<keyword id="KW-0812">Transmembrane</keyword>
<keyword id="KW-1133">Transmembrane helix</keyword>
<reference key="1">
    <citation type="journal article" date="1995" name="Genomics">
        <title>Molecular cloning and tissue expression of FAT, the human homologue of the Drosophila fat gene that is located on chromosome 4q34-q35 and encodes a putative adhesion molecule.</title>
        <authorList>
            <person name="Dunne J."/>
            <person name="Hanby A.M."/>
            <person name="Poulsom R."/>
            <person name="Jones T.A."/>
            <person name="Sheer D."/>
            <person name="Chin W.G."/>
            <person name="Da S.M."/>
            <person name="Zhao Q."/>
            <person name="Beverley P.C.L."/>
            <person name="Owen M.J."/>
        </authorList>
    </citation>
    <scope>NUCLEOTIDE SEQUENCE [MRNA]</scope>
    <source>
        <tissue>Lymphocyte</tissue>
    </source>
</reference>
<reference key="2">
    <citation type="journal article" date="2005" name="Nature">
        <title>Generation and annotation of the DNA sequences of human chromosomes 2 and 4.</title>
        <authorList>
            <person name="Hillier L.W."/>
            <person name="Graves T.A."/>
            <person name="Fulton R.S."/>
            <person name="Fulton L.A."/>
            <person name="Pepin K.H."/>
            <person name="Minx P."/>
            <person name="Wagner-McPherson C."/>
            <person name="Layman D."/>
            <person name="Wylie K."/>
            <person name="Sekhon M."/>
            <person name="Becker M.C."/>
            <person name="Fewell G.A."/>
            <person name="Delehaunty K.D."/>
            <person name="Miner T.L."/>
            <person name="Nash W.E."/>
            <person name="Kremitzki C."/>
            <person name="Oddy L."/>
            <person name="Du H."/>
            <person name="Sun H."/>
            <person name="Bradshaw-Cordum H."/>
            <person name="Ali J."/>
            <person name="Carter J."/>
            <person name="Cordes M."/>
            <person name="Harris A."/>
            <person name="Isak A."/>
            <person name="van Brunt A."/>
            <person name="Nguyen C."/>
            <person name="Du F."/>
            <person name="Courtney L."/>
            <person name="Kalicki J."/>
            <person name="Ozersky P."/>
            <person name="Abbott S."/>
            <person name="Armstrong J."/>
            <person name="Belter E.A."/>
            <person name="Caruso L."/>
            <person name="Cedroni M."/>
            <person name="Cotton M."/>
            <person name="Davidson T."/>
            <person name="Desai A."/>
            <person name="Elliott G."/>
            <person name="Erb T."/>
            <person name="Fronick C."/>
            <person name="Gaige T."/>
            <person name="Haakenson W."/>
            <person name="Haglund K."/>
            <person name="Holmes A."/>
            <person name="Harkins R."/>
            <person name="Kim K."/>
            <person name="Kruchowski S.S."/>
            <person name="Strong C.M."/>
            <person name="Grewal N."/>
            <person name="Goyea E."/>
            <person name="Hou S."/>
            <person name="Levy A."/>
            <person name="Martinka S."/>
            <person name="Mead K."/>
            <person name="McLellan M.D."/>
            <person name="Meyer R."/>
            <person name="Randall-Maher J."/>
            <person name="Tomlinson C."/>
            <person name="Dauphin-Kohlberg S."/>
            <person name="Kozlowicz-Reilly A."/>
            <person name="Shah N."/>
            <person name="Swearengen-Shahid S."/>
            <person name="Snider J."/>
            <person name="Strong J.T."/>
            <person name="Thompson J."/>
            <person name="Yoakum M."/>
            <person name="Leonard S."/>
            <person name="Pearman C."/>
            <person name="Trani L."/>
            <person name="Radionenko M."/>
            <person name="Waligorski J.E."/>
            <person name="Wang C."/>
            <person name="Rock S.M."/>
            <person name="Tin-Wollam A.-M."/>
            <person name="Maupin R."/>
            <person name="Latreille P."/>
            <person name="Wendl M.C."/>
            <person name="Yang S.-P."/>
            <person name="Pohl C."/>
            <person name="Wallis J.W."/>
            <person name="Spieth J."/>
            <person name="Bieri T.A."/>
            <person name="Berkowicz N."/>
            <person name="Nelson J.O."/>
            <person name="Osborne J."/>
            <person name="Ding L."/>
            <person name="Meyer R."/>
            <person name="Sabo A."/>
            <person name="Shotland Y."/>
            <person name="Sinha P."/>
            <person name="Wohldmann P.E."/>
            <person name="Cook L.L."/>
            <person name="Hickenbotham M.T."/>
            <person name="Eldred J."/>
            <person name="Williams D."/>
            <person name="Jones T.A."/>
            <person name="She X."/>
            <person name="Ciccarelli F.D."/>
            <person name="Izaurralde E."/>
            <person name="Taylor J."/>
            <person name="Schmutz J."/>
            <person name="Myers R.M."/>
            <person name="Cox D.R."/>
            <person name="Huang X."/>
            <person name="McPherson J.D."/>
            <person name="Mardis E.R."/>
            <person name="Clifton S.W."/>
            <person name="Warren W.C."/>
            <person name="Chinwalla A.T."/>
            <person name="Eddy S.R."/>
            <person name="Marra M.A."/>
            <person name="Ovcharenko I."/>
            <person name="Furey T.S."/>
            <person name="Miller W."/>
            <person name="Eichler E.E."/>
            <person name="Bork P."/>
            <person name="Suyama M."/>
            <person name="Torrents D."/>
            <person name="Waterston R.H."/>
            <person name="Wilson R.K."/>
        </authorList>
    </citation>
    <scope>NUCLEOTIDE SEQUENCE [LARGE SCALE GENOMIC DNA]</scope>
</reference>
<reference key="3">
    <citation type="journal article" date="2005" name="Exp. Cell Res.">
        <title>Processing of the human protocadherin Fat1 and translocation of its cytoplasmic domain to the nucleus.</title>
        <authorList>
            <person name="Magg T."/>
            <person name="Schreiner D."/>
            <person name="Solis G.P."/>
            <person name="Bade E.G."/>
            <person name="Hofer H.W."/>
        </authorList>
    </citation>
    <scope>SUBCELLULAR LOCATION</scope>
    <scope>PROTEOLYTIC CLEAVAGE</scope>
</reference>
<reference key="4">
    <citation type="journal article" date="2008" name="J. Proteome Res.">
        <title>Combining protein-based IMAC, peptide-based IMAC, and MudPIT for efficient phosphoproteomic analysis.</title>
        <authorList>
            <person name="Cantin G.T."/>
            <person name="Yi W."/>
            <person name="Lu B."/>
            <person name="Park S.K."/>
            <person name="Xu T."/>
            <person name="Lee J.-D."/>
            <person name="Yates J.R. III"/>
        </authorList>
    </citation>
    <scope>IDENTIFICATION BY MASS SPECTROMETRY [LARGE SCALE ANALYSIS]</scope>
    <source>
        <tissue>Cervix carcinoma</tissue>
    </source>
</reference>
<reference key="5">
    <citation type="journal article" date="2009" name="J. Biol. Chem.">
        <title>Atrophin proteins interact with the Fat1 cadherin and regulate migration and orientation in vascular smooth muscle cells.</title>
        <authorList>
            <person name="Hou R."/>
            <person name="Sibinga N.E."/>
        </authorList>
    </citation>
    <scope>INTERACTION WITH ATN1 AND RERE</scope>
</reference>
<reference key="6">
    <citation type="journal article" date="2009" name="J. Proteome Res.">
        <title>Glycoproteomics analysis of human liver tissue by combination of multiple enzyme digestion and hydrazide chemistry.</title>
        <authorList>
            <person name="Chen R."/>
            <person name="Jiang X."/>
            <person name="Sun D."/>
            <person name="Han G."/>
            <person name="Wang F."/>
            <person name="Ye M."/>
            <person name="Wang L."/>
            <person name="Zou H."/>
        </authorList>
    </citation>
    <scope>GLYCOSYLATION [LARGE SCALE ANALYSIS] AT ASN-3422 AND ASN-3716</scope>
    <source>
        <tissue>Liver</tissue>
    </source>
</reference>
<reference key="7">
    <citation type="journal article" date="2009" name="Nat. Biotechnol.">
        <title>Mass-spectrometric identification and relative quantification of N-linked cell surface glycoproteins.</title>
        <authorList>
            <person name="Wollscheid B."/>
            <person name="Bausch-Fluck D."/>
            <person name="Henderson C."/>
            <person name="O'Brien R."/>
            <person name="Bibel M."/>
            <person name="Schiess R."/>
            <person name="Aebersold R."/>
            <person name="Watts J.D."/>
        </authorList>
    </citation>
    <scope>GLYCOSYLATION [LARGE SCALE ANALYSIS] AT ASN-3716</scope>
    <source>
        <tissue>Leukemic T-cell</tissue>
    </source>
</reference>
<reference key="8">
    <citation type="journal article" date="2011" name="BMC Syst. Biol.">
        <title>Initial characterization of the human central proteome.</title>
        <authorList>
            <person name="Burkard T.R."/>
            <person name="Planyavsky M."/>
            <person name="Kaupe I."/>
            <person name="Breitwieser F.P."/>
            <person name="Buerckstuemmer T."/>
            <person name="Bennett K.L."/>
            <person name="Superti-Furga G."/>
            <person name="Colinge J."/>
        </authorList>
    </citation>
    <scope>IDENTIFICATION BY MASS SPECTROMETRY [LARGE SCALE ANALYSIS]</scope>
</reference>
<reference key="9">
    <citation type="journal article" date="2016" name="J. Med. Genet.">
        <title>Homozygous missense mutation in the LMAN2L gene segregates with intellectual disability in a large consanguineous Pakistani family.</title>
        <authorList>
            <person name="Rafiullah R."/>
            <person name="Aslamkhan M."/>
            <person name="Paramasivam N."/>
            <person name="Thiel C."/>
            <person name="Mustafa G."/>
            <person name="Wiemann S."/>
            <person name="Schlesner M."/>
            <person name="Wade R.C."/>
            <person name="Rappold G.A."/>
            <person name="Berkel S."/>
        </authorList>
    </citation>
    <scope>VARIANTS SER-902; VAL-1393 AND SER-3732</scope>
</reference>
<reference key="10">
    <citation type="journal article" date="2017" name="Brain">
        <title>Exome sequencing and network analysis identifies shared mechanisms underlying spinocerebellar ataxia.</title>
        <authorList>
            <person name="Nibbeling E.A.R."/>
            <person name="Duarri A."/>
            <person name="Verschuuren-Bemelmans C.C."/>
            <person name="Fokkens M.R."/>
            <person name="Karjalainen J.M."/>
            <person name="Smeets C.J.L.M."/>
            <person name="de Boer-Bergsma J.J."/>
            <person name="van der Vries G."/>
            <person name="Dooijes D."/>
            <person name="Bampi G.B."/>
            <person name="van Diemen C."/>
            <person name="Brunt E."/>
            <person name="Ippel E."/>
            <person name="Kremer B."/>
            <person name="Vlak M."/>
            <person name="Adir N."/>
            <person name="Wijmenga C."/>
            <person name="van de Warrenburg B.P.C."/>
            <person name="Franke L."/>
            <person name="Sinke R.J."/>
            <person name="Verbeek D.S."/>
        </authorList>
    </citation>
    <scope>VARIANTS LEU-546; ASP-1147; HIS-1930 AND MET-4422</scope>
</reference>
<proteinExistence type="evidence at protein level"/>
<accession>Q14517</accession>
<evidence type="ECO:0000250" key="1"/>
<evidence type="ECO:0000255" key="2"/>
<evidence type="ECO:0000255" key="3">
    <source>
        <dbReference type="PROSITE-ProRule" id="PRU00043"/>
    </source>
</evidence>
<evidence type="ECO:0000255" key="4">
    <source>
        <dbReference type="PROSITE-ProRule" id="PRU00076"/>
    </source>
</evidence>
<evidence type="ECO:0000255" key="5">
    <source>
        <dbReference type="PROSITE-ProRule" id="PRU00122"/>
    </source>
</evidence>
<evidence type="ECO:0000256" key="6">
    <source>
        <dbReference type="SAM" id="MobiDB-lite"/>
    </source>
</evidence>
<evidence type="ECO:0000269" key="7">
    <source>
    </source>
</evidence>
<evidence type="ECO:0000269" key="8">
    <source>
    </source>
</evidence>
<evidence type="ECO:0000269" key="9">
    <source>
    </source>
</evidence>
<evidence type="ECO:0000269" key="10">
    <source>
    </source>
</evidence>
<evidence type="ECO:0000269" key="11">
    <source>
    </source>
</evidence>
<evidence type="ECO:0000269" key="12">
    <source>
    </source>
</evidence>
<evidence type="ECO:0000305" key="13"/>
<dbReference type="EMBL" id="X87241">
    <property type="protein sequence ID" value="CAA60685.1"/>
    <property type="molecule type" value="mRNA"/>
</dbReference>
<dbReference type="EMBL" id="AC107050">
    <property type="status" value="NOT_ANNOTATED_CDS"/>
    <property type="molecule type" value="Genomic_DNA"/>
</dbReference>
<dbReference type="EMBL" id="AC110761">
    <property type="status" value="NOT_ANNOTATED_CDS"/>
    <property type="molecule type" value="Genomic_DNA"/>
</dbReference>
<dbReference type="CCDS" id="CCDS47177.1"/>
<dbReference type="RefSeq" id="NP_005236.2">
    <property type="nucleotide sequence ID" value="NM_005245.4"/>
</dbReference>
<dbReference type="RefSeq" id="XP_006714202.1">
    <property type="nucleotide sequence ID" value="XM_006714139.4"/>
</dbReference>
<dbReference type="SMR" id="Q14517"/>
<dbReference type="BioGRID" id="108489">
    <property type="interactions" value="170"/>
</dbReference>
<dbReference type="FunCoup" id="Q14517">
    <property type="interactions" value="1576"/>
</dbReference>
<dbReference type="IntAct" id="Q14517">
    <property type="interactions" value="68"/>
</dbReference>
<dbReference type="MINT" id="Q14517"/>
<dbReference type="STRING" id="9606.ENSP00000406229"/>
<dbReference type="GlyCosmos" id="Q14517">
    <property type="glycosylation" value="22 sites, No reported glycans"/>
</dbReference>
<dbReference type="GlyGen" id="Q14517">
    <property type="glycosylation" value="34 sites, 29 N-linked glycans (18 sites), 2 O-linked glycans (9 sites)"/>
</dbReference>
<dbReference type="iPTMnet" id="Q14517"/>
<dbReference type="PhosphoSitePlus" id="Q14517"/>
<dbReference type="SwissPalm" id="Q14517"/>
<dbReference type="BioMuta" id="FAT1"/>
<dbReference type="DMDM" id="334302792"/>
<dbReference type="jPOST" id="Q14517"/>
<dbReference type="MassIVE" id="Q14517"/>
<dbReference type="PaxDb" id="9606-ENSP00000406229"/>
<dbReference type="PeptideAtlas" id="Q14517"/>
<dbReference type="ProteomicsDB" id="60019"/>
<dbReference type="Pumba" id="Q14517"/>
<dbReference type="Antibodypedia" id="964">
    <property type="antibodies" value="180 antibodies from 26 providers"/>
</dbReference>
<dbReference type="DNASU" id="2195"/>
<dbReference type="Ensembl" id="ENST00000441802.7">
    <property type="protein sequence ID" value="ENSP00000406229.2"/>
    <property type="gene ID" value="ENSG00000083857.15"/>
</dbReference>
<dbReference type="GeneID" id="2195"/>
<dbReference type="KEGG" id="hsa:2195"/>
<dbReference type="MANE-Select" id="ENST00000441802.7">
    <property type="protein sequence ID" value="ENSP00000406229.2"/>
    <property type="RefSeq nucleotide sequence ID" value="NM_005245.4"/>
    <property type="RefSeq protein sequence ID" value="NP_005236.2"/>
</dbReference>
<dbReference type="UCSC" id="uc003izf.4">
    <property type="organism name" value="human"/>
</dbReference>
<dbReference type="AGR" id="HGNC:3595"/>
<dbReference type="CTD" id="2195"/>
<dbReference type="DisGeNET" id="2195"/>
<dbReference type="GeneCards" id="FAT1"/>
<dbReference type="HGNC" id="HGNC:3595">
    <property type="gene designation" value="FAT1"/>
</dbReference>
<dbReference type="HPA" id="ENSG00000083857">
    <property type="expression patterns" value="Tissue enhanced (choroid)"/>
</dbReference>
<dbReference type="MalaCards" id="FAT1"/>
<dbReference type="MIM" id="600976">
    <property type="type" value="gene"/>
</dbReference>
<dbReference type="neXtProt" id="NX_Q14517"/>
<dbReference type="OpenTargets" id="ENSG00000083857"/>
<dbReference type="PharmGKB" id="PA164719952"/>
<dbReference type="VEuPathDB" id="HostDB:ENSG00000083857"/>
<dbReference type="eggNOG" id="KOG1219">
    <property type="taxonomic scope" value="Eukaryota"/>
</dbReference>
<dbReference type="GeneTree" id="ENSGT00940000157733"/>
<dbReference type="HOGENOM" id="CLU_000042_2_0_1"/>
<dbReference type="InParanoid" id="Q14517"/>
<dbReference type="OrthoDB" id="6252479at2759"/>
<dbReference type="PAN-GO" id="Q14517">
    <property type="GO annotations" value="1 GO annotation based on evolutionary models"/>
</dbReference>
<dbReference type="PhylomeDB" id="Q14517"/>
<dbReference type="TreeFam" id="TF316403"/>
<dbReference type="PathwayCommons" id="Q14517"/>
<dbReference type="SignaLink" id="Q14517"/>
<dbReference type="BioGRID-ORCS" id="2195">
    <property type="hits" value="7 hits in 1164 CRISPR screens"/>
</dbReference>
<dbReference type="ChiTaRS" id="FAT1">
    <property type="organism name" value="human"/>
</dbReference>
<dbReference type="GeneWiki" id="FAT_(gene)"/>
<dbReference type="GenomeRNAi" id="2195"/>
<dbReference type="Pharos" id="Q14517">
    <property type="development level" value="Tbio"/>
</dbReference>
<dbReference type="PRO" id="PR:Q14517"/>
<dbReference type="Proteomes" id="UP000005640">
    <property type="component" value="Chromosome 4"/>
</dbReference>
<dbReference type="RNAct" id="Q14517">
    <property type="molecule type" value="protein"/>
</dbReference>
<dbReference type="Bgee" id="ENSG00000083857">
    <property type="expression patterns" value="Expressed in choroid plexus epithelium and 203 other cell types or tissues"/>
</dbReference>
<dbReference type="ExpressionAtlas" id="Q14517">
    <property type="expression patterns" value="baseline and differential"/>
</dbReference>
<dbReference type="GO" id="GO:0016324">
    <property type="term" value="C:apical plasma membrane"/>
    <property type="evidence" value="ECO:0007669"/>
    <property type="project" value="Ensembl"/>
</dbReference>
<dbReference type="GO" id="GO:0005911">
    <property type="term" value="C:cell-cell junction"/>
    <property type="evidence" value="ECO:0000314"/>
    <property type="project" value="UniProtKB"/>
</dbReference>
<dbReference type="GO" id="GO:0005829">
    <property type="term" value="C:cytosol"/>
    <property type="evidence" value="ECO:0007669"/>
    <property type="project" value="Ensembl"/>
</dbReference>
<dbReference type="GO" id="GO:0070062">
    <property type="term" value="C:extracellular exosome"/>
    <property type="evidence" value="ECO:0007005"/>
    <property type="project" value="UniProtKB"/>
</dbReference>
<dbReference type="GO" id="GO:0030175">
    <property type="term" value="C:filopodium"/>
    <property type="evidence" value="ECO:0007669"/>
    <property type="project" value="Ensembl"/>
</dbReference>
<dbReference type="GO" id="GO:0005925">
    <property type="term" value="C:focal adhesion"/>
    <property type="evidence" value="ECO:0007005"/>
    <property type="project" value="UniProtKB"/>
</dbReference>
<dbReference type="GO" id="GO:0030027">
    <property type="term" value="C:lamellipodium"/>
    <property type="evidence" value="ECO:0007669"/>
    <property type="project" value="Ensembl"/>
</dbReference>
<dbReference type="GO" id="GO:0005634">
    <property type="term" value="C:nucleus"/>
    <property type="evidence" value="ECO:0000314"/>
    <property type="project" value="UniProtKB"/>
</dbReference>
<dbReference type="GO" id="GO:0048471">
    <property type="term" value="C:perinuclear region of cytoplasm"/>
    <property type="evidence" value="ECO:0000314"/>
    <property type="project" value="UniProtKB"/>
</dbReference>
<dbReference type="GO" id="GO:0005886">
    <property type="term" value="C:plasma membrane"/>
    <property type="evidence" value="ECO:0000314"/>
    <property type="project" value="UniProtKB"/>
</dbReference>
<dbReference type="GO" id="GO:0005509">
    <property type="term" value="F:calcium ion binding"/>
    <property type="evidence" value="ECO:0007669"/>
    <property type="project" value="InterPro"/>
</dbReference>
<dbReference type="GO" id="GO:0007015">
    <property type="term" value="P:actin filament organization"/>
    <property type="evidence" value="ECO:0000250"/>
    <property type="project" value="UniProtKB"/>
</dbReference>
<dbReference type="GO" id="GO:0009653">
    <property type="term" value="P:anatomical structure morphogenesis"/>
    <property type="evidence" value="ECO:0000304"/>
    <property type="project" value="ProtInc"/>
</dbReference>
<dbReference type="GO" id="GO:0007155">
    <property type="term" value="P:cell adhesion"/>
    <property type="evidence" value="ECO:0000304"/>
    <property type="project" value="ProtInc"/>
</dbReference>
<dbReference type="GO" id="GO:0016477">
    <property type="term" value="P:cell migration"/>
    <property type="evidence" value="ECO:0000250"/>
    <property type="project" value="UniProtKB"/>
</dbReference>
<dbReference type="GO" id="GO:0098609">
    <property type="term" value="P:cell-cell adhesion"/>
    <property type="evidence" value="ECO:0000250"/>
    <property type="project" value="UniProtKB"/>
</dbReference>
<dbReference type="GO" id="GO:0007267">
    <property type="term" value="P:cell-cell signaling"/>
    <property type="evidence" value="ECO:0000304"/>
    <property type="project" value="ProtInc"/>
</dbReference>
<dbReference type="GO" id="GO:1904385">
    <property type="term" value="P:cellular response to angiotensin"/>
    <property type="evidence" value="ECO:0007669"/>
    <property type="project" value="Ensembl"/>
</dbReference>
<dbReference type="GO" id="GO:0003382">
    <property type="term" value="P:epithelial cell morphogenesis"/>
    <property type="evidence" value="ECO:0007669"/>
    <property type="project" value="Ensembl"/>
</dbReference>
<dbReference type="GO" id="GO:0003412">
    <property type="term" value="P:establishment of epithelial cell apical/basal polarity involved in camera-type eye morphogenesis"/>
    <property type="evidence" value="ECO:0007669"/>
    <property type="project" value="Ensembl"/>
</dbReference>
<dbReference type="GO" id="GO:0007163">
    <property type="term" value="P:establishment or maintenance of cell polarity"/>
    <property type="evidence" value="ECO:0000250"/>
    <property type="project" value="UniProtKB"/>
</dbReference>
<dbReference type="GO" id="GO:0007156">
    <property type="term" value="P:homophilic cell adhesion via plasma membrane adhesion molecules"/>
    <property type="evidence" value="ECO:0007669"/>
    <property type="project" value="InterPro"/>
</dbReference>
<dbReference type="GO" id="GO:0002088">
    <property type="term" value="P:lens development in camera-type eye"/>
    <property type="evidence" value="ECO:0007669"/>
    <property type="project" value="Ensembl"/>
</dbReference>
<dbReference type="GO" id="GO:1904754">
    <property type="term" value="P:positive regulation of vascular associated smooth muscle cell migration"/>
    <property type="evidence" value="ECO:0007669"/>
    <property type="project" value="Ensembl"/>
</dbReference>
<dbReference type="CDD" id="cd11304">
    <property type="entry name" value="Cadherin_repeat"/>
    <property type="match status" value="33"/>
</dbReference>
<dbReference type="CDD" id="cd00054">
    <property type="entry name" value="EGF_CA"/>
    <property type="match status" value="4"/>
</dbReference>
<dbReference type="CDD" id="cd00110">
    <property type="entry name" value="LamG"/>
    <property type="match status" value="1"/>
</dbReference>
<dbReference type="FunFam" id="2.60.40.60:FF:000013">
    <property type="entry name" value="Cadherin EGF LAG seven-pass G-type receptor"/>
    <property type="match status" value="2"/>
</dbReference>
<dbReference type="FunFam" id="2.10.25.10:FF:000152">
    <property type="entry name" value="FAT atypical cadherin 1"/>
    <property type="match status" value="1"/>
</dbReference>
<dbReference type="FunFam" id="2.10.25.10:FF:000154">
    <property type="entry name" value="FAT atypical cadherin 1"/>
    <property type="match status" value="1"/>
</dbReference>
<dbReference type="FunFam" id="2.10.25.10:FF:000179">
    <property type="entry name" value="FAT atypical cadherin 1"/>
    <property type="match status" value="1"/>
</dbReference>
<dbReference type="FunFam" id="2.60.120.200:FF:000024">
    <property type="entry name" value="FAT atypical cadherin 1"/>
    <property type="match status" value="1"/>
</dbReference>
<dbReference type="FunFam" id="2.60.40.60:FF:000015">
    <property type="entry name" value="FAT atypical cadherin 1"/>
    <property type="match status" value="1"/>
</dbReference>
<dbReference type="FunFam" id="2.60.40.60:FF:000021">
    <property type="entry name" value="FAT atypical cadherin 1"/>
    <property type="match status" value="3"/>
</dbReference>
<dbReference type="FunFam" id="2.60.40.60:FF:000026">
    <property type="entry name" value="FAT atypical cadherin 1"/>
    <property type="match status" value="2"/>
</dbReference>
<dbReference type="FunFam" id="2.60.40.60:FF:000032">
    <property type="entry name" value="FAT atypical cadherin 1"/>
    <property type="match status" value="1"/>
</dbReference>
<dbReference type="FunFam" id="2.60.40.60:FF:000033">
    <property type="entry name" value="FAT atypical cadherin 1"/>
    <property type="match status" value="1"/>
</dbReference>
<dbReference type="FunFam" id="2.60.40.60:FF:000037">
    <property type="entry name" value="FAT atypical cadherin 1"/>
    <property type="match status" value="1"/>
</dbReference>
<dbReference type="FunFam" id="2.60.40.60:FF:000041">
    <property type="entry name" value="FAT atypical cadherin 1"/>
    <property type="match status" value="1"/>
</dbReference>
<dbReference type="FunFam" id="2.60.40.60:FF:000051">
    <property type="entry name" value="FAT atypical cadherin 1"/>
    <property type="match status" value="1"/>
</dbReference>
<dbReference type="FunFam" id="2.60.40.60:FF:000052">
    <property type="entry name" value="FAT atypical cadherin 1"/>
    <property type="match status" value="1"/>
</dbReference>
<dbReference type="FunFam" id="2.60.40.60:FF:000064">
    <property type="entry name" value="FAT atypical cadherin 1"/>
    <property type="match status" value="1"/>
</dbReference>
<dbReference type="FunFam" id="2.60.40.60:FF:000065">
    <property type="entry name" value="FAT atypical cadherin 1"/>
    <property type="match status" value="1"/>
</dbReference>
<dbReference type="FunFam" id="2.60.40.60:FF:000066">
    <property type="entry name" value="FAT atypical cadherin 1"/>
    <property type="match status" value="1"/>
</dbReference>
<dbReference type="FunFam" id="2.60.40.60:FF:000067">
    <property type="entry name" value="FAT atypical cadherin 1"/>
    <property type="match status" value="1"/>
</dbReference>
<dbReference type="FunFam" id="2.60.40.60:FF:000071">
    <property type="entry name" value="FAT atypical cadherin 1"/>
    <property type="match status" value="1"/>
</dbReference>
<dbReference type="FunFam" id="2.60.40.60:FF:000075">
    <property type="entry name" value="FAT atypical cadherin 1"/>
    <property type="match status" value="1"/>
</dbReference>
<dbReference type="FunFam" id="2.60.40.60:FF:000079">
    <property type="entry name" value="FAT atypical cadherin 1"/>
    <property type="match status" value="1"/>
</dbReference>
<dbReference type="FunFam" id="2.60.40.60:FF:000080">
    <property type="entry name" value="FAT atypical cadherin 1"/>
    <property type="match status" value="1"/>
</dbReference>
<dbReference type="FunFam" id="2.60.40.60:FF:000089">
    <property type="entry name" value="FAT atypical cadherin 1"/>
    <property type="match status" value="1"/>
</dbReference>
<dbReference type="FunFam" id="2.60.40.60:FF:000107">
    <property type="entry name" value="FAT atypical cadherin 1"/>
    <property type="match status" value="1"/>
</dbReference>
<dbReference type="FunFam" id="2.60.40.60:FF:000161">
    <property type="entry name" value="FAT atypical cadherin 1"/>
    <property type="match status" value="1"/>
</dbReference>
<dbReference type="FunFam" id="2.60.40.60:FF:000024">
    <property type="entry name" value="FAT atypical cadherin 3"/>
    <property type="match status" value="1"/>
</dbReference>
<dbReference type="FunFam" id="2.60.40.60:FF:000039">
    <property type="entry name" value="FAT atypical cadherin 3"/>
    <property type="match status" value="1"/>
</dbReference>
<dbReference type="FunFam" id="2.60.40.60:FF:000053">
    <property type="entry name" value="FAT atypical cadherin 3"/>
    <property type="match status" value="1"/>
</dbReference>
<dbReference type="FunFam" id="2.60.40.60:FF:000058">
    <property type="entry name" value="FAT atypical cadherin 3"/>
    <property type="match status" value="1"/>
</dbReference>
<dbReference type="FunFam" id="2.60.40.60:FF:000059">
    <property type="entry name" value="FAT atypical cadherin 3"/>
    <property type="match status" value="1"/>
</dbReference>
<dbReference type="FunFam" id="2.60.40.60:FF:000061">
    <property type="entry name" value="FAT atypical cadherin 3"/>
    <property type="match status" value="2"/>
</dbReference>
<dbReference type="FunFam" id="2.60.40.60:FF:000084">
    <property type="entry name" value="FAT atypical cadherin 3"/>
    <property type="match status" value="1"/>
</dbReference>
<dbReference type="FunFam" id="2.10.25.10:FF:000057">
    <property type="entry name" value="protocadherin Fat 1 isoform X2"/>
    <property type="match status" value="1"/>
</dbReference>
<dbReference type="FunFam" id="2.60.40.60:FF:000035">
    <property type="entry name" value="Protocadherin Fat 3"/>
    <property type="match status" value="1"/>
</dbReference>
<dbReference type="Gene3D" id="2.60.120.200">
    <property type="match status" value="1"/>
</dbReference>
<dbReference type="Gene3D" id="2.60.40.60">
    <property type="entry name" value="Cadherins"/>
    <property type="match status" value="33"/>
</dbReference>
<dbReference type="Gene3D" id="2.10.25.10">
    <property type="entry name" value="Laminin"/>
    <property type="match status" value="4"/>
</dbReference>
<dbReference type="InterPro" id="IPR002126">
    <property type="entry name" value="Cadherin-like_dom"/>
</dbReference>
<dbReference type="InterPro" id="IPR015919">
    <property type="entry name" value="Cadherin-like_sf"/>
</dbReference>
<dbReference type="InterPro" id="IPR020894">
    <property type="entry name" value="Cadherin_CS"/>
</dbReference>
<dbReference type="InterPro" id="IPR013320">
    <property type="entry name" value="ConA-like_dom_sf"/>
</dbReference>
<dbReference type="InterPro" id="IPR001881">
    <property type="entry name" value="EGF-like_Ca-bd_dom"/>
</dbReference>
<dbReference type="InterPro" id="IPR000742">
    <property type="entry name" value="EGF-like_dom"/>
</dbReference>
<dbReference type="InterPro" id="IPR000152">
    <property type="entry name" value="EGF-type_Asp/Asn_hydroxyl_site"/>
</dbReference>
<dbReference type="InterPro" id="IPR018097">
    <property type="entry name" value="EGF_Ca-bd_CS"/>
</dbReference>
<dbReference type="InterPro" id="IPR001791">
    <property type="entry name" value="Laminin_G"/>
</dbReference>
<dbReference type="PANTHER" id="PTHR24026">
    <property type="entry name" value="FAT ATYPICAL CADHERIN-RELATED"/>
    <property type="match status" value="1"/>
</dbReference>
<dbReference type="PANTHER" id="PTHR24026:SF136">
    <property type="entry name" value="PROTOCADHERIN-23"/>
    <property type="match status" value="1"/>
</dbReference>
<dbReference type="Pfam" id="PF00028">
    <property type="entry name" value="Cadherin"/>
    <property type="match status" value="29"/>
</dbReference>
<dbReference type="Pfam" id="PF00008">
    <property type="entry name" value="EGF"/>
    <property type="match status" value="2"/>
</dbReference>
<dbReference type="Pfam" id="PF02210">
    <property type="entry name" value="Laminin_G_2"/>
    <property type="match status" value="1"/>
</dbReference>
<dbReference type="PRINTS" id="PR00205">
    <property type="entry name" value="CADHERIN"/>
</dbReference>
<dbReference type="SMART" id="SM00112">
    <property type="entry name" value="CA"/>
    <property type="match status" value="34"/>
</dbReference>
<dbReference type="SMART" id="SM00181">
    <property type="entry name" value="EGF"/>
    <property type="match status" value="5"/>
</dbReference>
<dbReference type="SMART" id="SM00179">
    <property type="entry name" value="EGF_CA"/>
    <property type="match status" value="4"/>
</dbReference>
<dbReference type="SMART" id="SM00282">
    <property type="entry name" value="LamG"/>
    <property type="match status" value="1"/>
</dbReference>
<dbReference type="SUPFAM" id="SSF49313">
    <property type="entry name" value="Cadherin-like"/>
    <property type="match status" value="33"/>
</dbReference>
<dbReference type="SUPFAM" id="SSF49899">
    <property type="entry name" value="Concanavalin A-like lectins/glucanases"/>
    <property type="match status" value="1"/>
</dbReference>
<dbReference type="SUPFAM" id="SSF57196">
    <property type="entry name" value="EGF/Laminin"/>
    <property type="match status" value="4"/>
</dbReference>
<dbReference type="PROSITE" id="PS00010">
    <property type="entry name" value="ASX_HYDROXYL"/>
    <property type="match status" value="1"/>
</dbReference>
<dbReference type="PROSITE" id="PS00232">
    <property type="entry name" value="CADHERIN_1"/>
    <property type="match status" value="17"/>
</dbReference>
<dbReference type="PROSITE" id="PS50268">
    <property type="entry name" value="CADHERIN_2"/>
    <property type="match status" value="33"/>
</dbReference>
<dbReference type="PROSITE" id="PS00022">
    <property type="entry name" value="EGF_1"/>
    <property type="match status" value="4"/>
</dbReference>
<dbReference type="PROSITE" id="PS01186">
    <property type="entry name" value="EGF_2"/>
    <property type="match status" value="1"/>
</dbReference>
<dbReference type="PROSITE" id="PS50026">
    <property type="entry name" value="EGF_3"/>
    <property type="match status" value="5"/>
</dbReference>
<dbReference type="PROSITE" id="PS01187">
    <property type="entry name" value="EGF_CA"/>
    <property type="match status" value="1"/>
</dbReference>
<dbReference type="PROSITE" id="PS50025">
    <property type="entry name" value="LAM_G_DOMAIN"/>
    <property type="match status" value="1"/>
</dbReference>
<gene>
    <name type="primary">FAT1</name>
    <name type="synonym">CDHF7</name>
    <name type="synonym">FAT</name>
</gene>
<sequence>MGRHLALLLLLLLLFQHFGDSDGSQRLEQTPLQFTHLEYNVTVQENSAAKTYVGHPVKMGVYITHPAWEVRYKIVSGDSENLFKAEEYILGDFCFLRIRTKGGNTAILNREVKDHYTLIVKALEKNTNVEARTKVRVQVLDTNDLRPLFSPTSYSVSLPENTAIRTSIARVSATDADIGTNGEFYYSFKDRTDMFAIHPTSGVIVLTGRLDYLETKLYEMEILAADRGMKLYGSSGISSMAKLTVHIEQANECAPVITAVTLSPSELDRDPAYAIVTVDDCDQGANGDIASLSIVAGDLLQQFRTVRSFPGSKEYKVKAIGGIDWDSHPFGYNLTLQAKDKGTPPQFSSVKVIHVTSPQFKAGPVKFEKDVYRAEISEFAPPNTPVVMVKAIPAYSHLRYVFKSTPGKAKFSLNYNTGLISILEPVKRQQAAHFELEVTTSDRKASTKVLVKVLGANSNPPEFTQTAYKAAFDENVPIGTTVMSLSAVDPDEGENGYVTYSIANLNHVPFAIDHFTGAVSTSENLDYELMPRVYTLRIRASDWGLPYRREVEVLATITLNNLNDNTPLFEKINCEGTIPRDLGVGEQITTVSAIDADELQLVQYQIEAGNELDFFSLNPNSGVLSLKRSLMDGLGAKVSFHSLRITATDGENFATPLYINITVAASHKLVNLQCEETGVAKMLAEKLLQANKLHNQGEVEDIFFDSHSVNAHIPQFRSTLPTGIQVKENQPVGSSVIFMNSTDLDTGFNGKLVYAVSGGNEDSCFMIDMETGMLKILSPLDRETTDKYTLNITVYDLGIPQKAAWRLLHVVVVDANDNPPEFLQESYFVEVSEDKEVHSEIIQVEATDKDLGPNGHVTYSIVTDTDTFSIDSVTGVVNIARPLDRELQHEHSLKIEARDQAREEPQLFSTVVVKVSLEDVNDNPPTFIPPNYRVKVREDLPEGTVIMWLEAHDPDLGQSGQVRYSLLDHGEGNFDVDKLSGAVRIVQQLDFEKKQVYNLTVRAKDKGKPVSLSSTCYVEVEVVDVNENLHPPVFSSFVEKGTVKEDAPVGSLVMTVSAHDEDARRDGEIRYSIRDGSGVGVFKIGEETGVIETSDRLDRESTSHYWLTVFATDQGVVPLSSFIEIYIEVEDVNDNAPQTSEPVYYPEIMENSPKDVSVVQIEAFDPDSSSNDKLMYKITSGNPQGFFSIHPKTGLITTTSRKLDREQQDEHILEVTVTDNGSPPKSTIARVIVKILDENDNKPQFLQKFYKIRLPEREKPDRERNARREPLYHVIATDKDEGPNAEISYSIEDGNEHGKFFIEPKTGVVSSKRFSAAGEYDILSIKAVDNGRPQKSSTTRLHIEWISKPKPSLEPISFEESFFTFTVMESDPVAHMIGVISVEPPGIPLWFDITGGNYDSHFDVDKGTGTIIVAKPLDAEQKSNYNLTVEATDGTTTILTQVFIKVIDTNDHRPQFSTSKYEVVIPEDTAPETEILQISAVDQDEKNKLIYTLQSSRDPLSLKKFRLDPATGSLYTSEKLDHEAVHQHTLTVMVRDQDVPVKRNFARIVVNVSDTNDHAPWFTASSYKGRVYESAAVGSVVLQVTALDKDKGKNAEVLYSIESGNIGNSFMIDPVLGSIKTAKELDRSNQAEYDLMVKATDKGSPPMSEITSVRIFVTIADNASPKFTSKEYSVELSETVSIGSFVGMVTAHSQSSVVYEIKDGNTGDAFDINPHSGTIITQKALDFETLPIYTLIIQGTNMAGLSTNTTVLVHLQDENDNAPVFMQAEYTGLISESASINSVVLTDRNVPLVIRAADADKDSNALLVYHIVEPSVHTYFAIDSSTGAIHTVLSLDYEETSIFHFTVQVHDMGTPRLFAEYAANVTVHVIDINDCPPVFAKPLYEASLLLPTYKGVKVITVNATDADSSAFSQLIYSITEGNIGEKFSMDYKTGALTVQNTTQLRSRYELTVRASDGRFAGLTSVKINVKESKESHLKFTQDVYSAVVKENSTEAETLAVITAIGNPINEPLFYHILNPDRRFKISRTSGVLSTTGTPFDREQQEAFDVVVEVTEEHKPSAVAHVVVKVIVEDQNDNAPVFVNLPYYAVVKVDTEVGHVIRYVTAVDRDSGRNGEVHYYLKEHHEHFQIGPLGEISLKKQFELDTLNKEYLVTVVAKDGGNPAFSAEVIVPITVMNKAMPVFEKPFYSAEIAESIQVHSPVVHVQANSPEGLKVFYSITDGDPFSQFTINFNTGVINVIAPLDFEAHPAYKLSIRATDSLTGAHAEVFVDIIVDDINDNPPVFAQQSYAVTLSEASVIGTSVVQVRATDSDSEPNRGISYQMFGNHSKSHDHFHVDSSTGLISLLRTLDYEQSRQHTIFVRAVDGGMPTLSSDVIVTVDVTDLNDNPPLFEQQIYEARISEHAPHGHFVTCVKAYDADSSDIDKLQYSILSGNDHKHFVIDSATGIITLSNLHRHALKPFYSLNLSVSDGVFRSSTQVHVTVIGGNLHSPAFLQNEYEVELAENAPLHTLVMEVKTTDGDSGIYGHVTYHIVNDFAKDRFYINERGQIFTLEKLDRETPAEKVISVRLMAKDAGGKVAFCTVNVILTDDNDNAPQFRATKYEVNIGSSAAKGTSVVKVLASDADEGSNADITYAIEADSESVKENLEINKLSGVITTKESLIGLENEFFTFFVRAVDNGSPSKESVVLVYVKILPPEMQLPKFSEPFYTFTVSEDVPIGTEIDLIRAEHSGTVLYSLVKGNTPESNRDESFVIDRQSGRLKLEKSLDHETTKWYQFSILARCTQDDHEMVASVDVSIQVKDANDNSPVFESSPYEAFIVENLPGGSRVIQIRASDADSGTNGQVMYSLDQSQSVEVIESFAINMETGWITTLKELDHEKRDNYQIKVVASDHGEKIQLSSTAIVDVTVTDVNDSPPRFTAEIYKGTVSEDDPQGGVIAILSTTDADSEEINRQVTYFITGGDPLGQFAVETIQNEWKVYVKKPLDREKRDNYLLTITATDGTFSSKAIVEVKVLDANDNSPVCEKTLYSDTIPEDVLPGKLIMQISATDADIRSNAEITYTLLGSGAEKFKLNPDTGELKTSTPLDREEQAVYHLLVRATDGGGRFCQASIVLTLEDVNDNAPEFSADPYAITVFENTEPGTLLTRVQATDADAGLNRKILYSLIDSADGQFSINELSGIIQLEKPLDRELQAVYTLSLKAVDQGLPRRLTATGTVIVSVLDINDNPPVFEYREYGATVSEDILVGTEVLQVYAASRDIEANAEITYSIISGNEHGKFSIDSKTGAVFIIENLDYESSHEYYLTVEATDGGTPSLSDVATVNVNVTDINDNTPVFSQDTYTTVISEDAVLEQSVITVMADDADGPSNSHIHYSIIDGNQGSSFTIDPVRGEVKVTKLLDRETISGYTLTVQASDNGSPPRVNTTTVNIDVSDVNDNAPVFSRGNYSVIIQENKPVGFSVLQLVVTDEDSSHNGPPFFFTIVTGNDEKAFEVNPQGVLLTSSAIKRKEKDHYLLQVKVADNGKPQLSSLTYIDIRVIEESIYPPAILPLEIFITSSGEEYSGGVIGKIHATDQDVYDTLTYSLDPQMDNLFSVSSTGGKLIAHKKLDIGQYLLNVSVTDGKFTTVADITVHIRQVTQEMLNHTIAIRFANLTPEEFVGDYWRNFQRALRNILGVRRNDIQIVSLQSSEPHPHLDVLLFVEKPGSAQISTKQLLHKINSSVTDIEEIIGVRILNVFQKLCAGLDCPWKFCDEKVSVDESVMSTHSTARLSFVTPRHHRAAVCLCKEGRCPPVHHGCEDDPCPEGSECVSDPWEEKHTCVCPSGRFGQCPGSSSMTLTGNSYVKYRLTENENKLEMKLTMRLRTYSTHAVVMYARGTDYSILEIHHGRLQYKFDCGSGPGIVSVQSIQVNDGQWHAVALEVNGNYARLVLDQVHTASGTAPGTLKTLNLDNYVFFGGHIRQQGTRHGRSPQVGNGFRGCMDSIYLNGQELPLNSKPRSYAHIEESVDVSPGCFLTATEDCASNPCQNGGVCNPSPAGGYYCKCSALYIGTHCEISVNPCSSKPCLYGGTCVVDNGGFVCQCRGLYTGQRCQLSPYCKDEPCKNGGTCFDSLDGAVCQCDSGFRGERCQSDIDECSGNPCLHGALCENTHGSYHCNCSHEYRGRHCEDAAPNQYVSTPWNIGLAEGIGIVVFVAGIFLLVVVFVLCRKMISRKKKHQAEPKDKHLGPATAFLQRPYFDSKLNKNIYSDIPPQVPVRPISYTPSIPSDSRNNLDRNSFEGSAIPEHPEFSTFNPESVHGHRKAVAVCSVAPNLPPPPPSNSPSDSDSIQKPSWDFDYDTKVVDLDPCLSKKPLEEKPSQPYSARESLSEVQSLSSFQSESCDDNGYHWDTSDWMPSVPLPDIQEFPNYEVIDEQTPLYSADPNAIDTDYYPGGYDIESDFPPPPEDFPAADELPPLPPEFSNQFESIHPPRDMPAAGSLGSSSRNRQRFNLNQYLPNFYPLDMSEPQTKGTGENSTCREPHAPYPPGYQRHFEAPAVESMPMSVYASTASCSDVSACCEVESEVMMSDYESGDDGHFEEVTIPPLDSQQHTEV</sequence>